<comment type="function">
    <text evidence="1">Part of the Sec protein translocase complex. Interacts with the SecYEG preprotein conducting channel. Has a central role in coupling the hydrolysis of ATP to the transfer of proteins into and across the cell membrane, serving both as a receptor for the preprotein-SecB complex and as an ATP-driven molecular motor driving the stepwise translocation of polypeptide chains across the membrane.</text>
</comment>
<comment type="catalytic activity">
    <reaction evidence="1">
        <text>ATP + H2O + cellular proteinSide 1 = ADP + phosphate + cellular proteinSide 2.</text>
        <dbReference type="EC" id="7.4.2.8"/>
    </reaction>
</comment>
<comment type="cofactor">
    <cofactor evidence="1">
        <name>Zn(2+)</name>
        <dbReference type="ChEBI" id="CHEBI:29105"/>
    </cofactor>
    <text evidence="1">May bind 1 zinc ion per subunit.</text>
</comment>
<comment type="subunit">
    <text evidence="1">Monomer and homodimer. Part of the essential Sec protein translocation apparatus which comprises SecA, SecYEG and auxiliary proteins SecDF-YajC and YidC.</text>
</comment>
<comment type="subcellular location">
    <subcellularLocation>
        <location evidence="1">Cell inner membrane</location>
        <topology evidence="1">Peripheral membrane protein</topology>
        <orientation evidence="1">Cytoplasmic side</orientation>
    </subcellularLocation>
    <subcellularLocation>
        <location evidence="1">Cytoplasm</location>
    </subcellularLocation>
    <text evidence="1">Distribution is 50-50.</text>
</comment>
<comment type="similarity">
    <text evidence="1">Belongs to the SecA family.</text>
</comment>
<organism>
    <name type="scientific">Francisella tularensis subsp. tularensis (strain WY96-3418)</name>
    <dbReference type="NCBI Taxonomy" id="418136"/>
    <lineage>
        <taxon>Bacteria</taxon>
        <taxon>Pseudomonadati</taxon>
        <taxon>Pseudomonadota</taxon>
        <taxon>Gammaproteobacteria</taxon>
        <taxon>Thiotrichales</taxon>
        <taxon>Francisellaceae</taxon>
        <taxon>Francisella</taxon>
    </lineage>
</organism>
<dbReference type="EC" id="7.4.2.8" evidence="1"/>
<dbReference type="EMBL" id="CP000608">
    <property type="protein sequence ID" value="ABO47197.1"/>
    <property type="molecule type" value="Genomic_DNA"/>
</dbReference>
<dbReference type="RefSeq" id="WP_003026740.1">
    <property type="nucleotide sequence ID" value="NC_009257.1"/>
</dbReference>
<dbReference type="SMR" id="A4IZ46"/>
<dbReference type="KEGG" id="ftw:FTW_1470"/>
<dbReference type="HOGENOM" id="CLU_005314_3_0_6"/>
<dbReference type="GO" id="GO:0031522">
    <property type="term" value="C:cell envelope Sec protein transport complex"/>
    <property type="evidence" value="ECO:0007669"/>
    <property type="project" value="TreeGrafter"/>
</dbReference>
<dbReference type="GO" id="GO:0005829">
    <property type="term" value="C:cytosol"/>
    <property type="evidence" value="ECO:0007669"/>
    <property type="project" value="TreeGrafter"/>
</dbReference>
<dbReference type="GO" id="GO:0005886">
    <property type="term" value="C:plasma membrane"/>
    <property type="evidence" value="ECO:0007669"/>
    <property type="project" value="UniProtKB-SubCell"/>
</dbReference>
<dbReference type="GO" id="GO:0005524">
    <property type="term" value="F:ATP binding"/>
    <property type="evidence" value="ECO:0007669"/>
    <property type="project" value="UniProtKB-UniRule"/>
</dbReference>
<dbReference type="GO" id="GO:0046872">
    <property type="term" value="F:metal ion binding"/>
    <property type="evidence" value="ECO:0007669"/>
    <property type="project" value="UniProtKB-KW"/>
</dbReference>
<dbReference type="GO" id="GO:0008564">
    <property type="term" value="F:protein-exporting ATPase activity"/>
    <property type="evidence" value="ECO:0007669"/>
    <property type="project" value="UniProtKB-EC"/>
</dbReference>
<dbReference type="GO" id="GO:0065002">
    <property type="term" value="P:intracellular protein transmembrane transport"/>
    <property type="evidence" value="ECO:0007669"/>
    <property type="project" value="UniProtKB-UniRule"/>
</dbReference>
<dbReference type="GO" id="GO:0017038">
    <property type="term" value="P:protein import"/>
    <property type="evidence" value="ECO:0007669"/>
    <property type="project" value="InterPro"/>
</dbReference>
<dbReference type="GO" id="GO:0006605">
    <property type="term" value="P:protein targeting"/>
    <property type="evidence" value="ECO:0007669"/>
    <property type="project" value="UniProtKB-UniRule"/>
</dbReference>
<dbReference type="GO" id="GO:0043952">
    <property type="term" value="P:protein transport by the Sec complex"/>
    <property type="evidence" value="ECO:0007669"/>
    <property type="project" value="TreeGrafter"/>
</dbReference>
<dbReference type="CDD" id="cd17928">
    <property type="entry name" value="DEXDc_SecA"/>
    <property type="match status" value="1"/>
</dbReference>
<dbReference type="CDD" id="cd18803">
    <property type="entry name" value="SF2_C_secA"/>
    <property type="match status" value="1"/>
</dbReference>
<dbReference type="FunFam" id="3.40.50.300:FF:000113">
    <property type="entry name" value="Preprotein translocase subunit SecA"/>
    <property type="match status" value="1"/>
</dbReference>
<dbReference type="FunFam" id="3.90.1440.10:FF:000001">
    <property type="entry name" value="Preprotein translocase subunit SecA"/>
    <property type="match status" value="1"/>
</dbReference>
<dbReference type="FunFam" id="1.10.3060.10:FF:000003">
    <property type="entry name" value="Protein translocase subunit SecA"/>
    <property type="match status" value="1"/>
</dbReference>
<dbReference type="FunFam" id="3.40.50.300:FF:000334">
    <property type="entry name" value="Protein translocase subunit SecA"/>
    <property type="match status" value="1"/>
</dbReference>
<dbReference type="Gene3D" id="1.10.3060.10">
    <property type="entry name" value="Helical scaffold and wing domains of SecA"/>
    <property type="match status" value="1"/>
</dbReference>
<dbReference type="Gene3D" id="3.40.50.300">
    <property type="entry name" value="P-loop containing nucleotide triphosphate hydrolases"/>
    <property type="match status" value="2"/>
</dbReference>
<dbReference type="Gene3D" id="3.90.1440.10">
    <property type="entry name" value="SecA, preprotein cross-linking domain"/>
    <property type="match status" value="1"/>
</dbReference>
<dbReference type="HAMAP" id="MF_01382">
    <property type="entry name" value="SecA"/>
    <property type="match status" value="1"/>
</dbReference>
<dbReference type="InterPro" id="IPR014001">
    <property type="entry name" value="Helicase_ATP-bd"/>
</dbReference>
<dbReference type="InterPro" id="IPR001650">
    <property type="entry name" value="Helicase_C-like"/>
</dbReference>
<dbReference type="InterPro" id="IPR027417">
    <property type="entry name" value="P-loop_NTPase"/>
</dbReference>
<dbReference type="InterPro" id="IPR004027">
    <property type="entry name" value="SEC_C_motif"/>
</dbReference>
<dbReference type="InterPro" id="IPR000185">
    <property type="entry name" value="SecA"/>
</dbReference>
<dbReference type="InterPro" id="IPR020937">
    <property type="entry name" value="SecA_CS"/>
</dbReference>
<dbReference type="InterPro" id="IPR011115">
    <property type="entry name" value="SecA_DEAD"/>
</dbReference>
<dbReference type="InterPro" id="IPR014018">
    <property type="entry name" value="SecA_motor_DEAD"/>
</dbReference>
<dbReference type="InterPro" id="IPR011130">
    <property type="entry name" value="SecA_preprotein_X-link_dom"/>
</dbReference>
<dbReference type="InterPro" id="IPR044722">
    <property type="entry name" value="SecA_SF2_C"/>
</dbReference>
<dbReference type="InterPro" id="IPR011116">
    <property type="entry name" value="SecA_Wing/Scaffold"/>
</dbReference>
<dbReference type="InterPro" id="IPR036266">
    <property type="entry name" value="SecA_Wing/Scaffold_sf"/>
</dbReference>
<dbReference type="InterPro" id="IPR036670">
    <property type="entry name" value="SecA_X-link_sf"/>
</dbReference>
<dbReference type="NCBIfam" id="NF009538">
    <property type="entry name" value="PRK12904.1"/>
    <property type="match status" value="1"/>
</dbReference>
<dbReference type="NCBIfam" id="TIGR00963">
    <property type="entry name" value="secA"/>
    <property type="match status" value="1"/>
</dbReference>
<dbReference type="PANTHER" id="PTHR30612:SF0">
    <property type="entry name" value="CHLOROPLAST PROTEIN-TRANSPORTING ATPASE"/>
    <property type="match status" value="1"/>
</dbReference>
<dbReference type="PANTHER" id="PTHR30612">
    <property type="entry name" value="SECA INNER MEMBRANE COMPONENT OF SEC PROTEIN SECRETION SYSTEM"/>
    <property type="match status" value="1"/>
</dbReference>
<dbReference type="Pfam" id="PF21090">
    <property type="entry name" value="P-loop_SecA"/>
    <property type="match status" value="1"/>
</dbReference>
<dbReference type="Pfam" id="PF02810">
    <property type="entry name" value="SEC-C"/>
    <property type="match status" value="1"/>
</dbReference>
<dbReference type="Pfam" id="PF07517">
    <property type="entry name" value="SecA_DEAD"/>
    <property type="match status" value="1"/>
</dbReference>
<dbReference type="Pfam" id="PF01043">
    <property type="entry name" value="SecA_PP_bind"/>
    <property type="match status" value="1"/>
</dbReference>
<dbReference type="Pfam" id="PF07516">
    <property type="entry name" value="SecA_SW"/>
    <property type="match status" value="1"/>
</dbReference>
<dbReference type="PRINTS" id="PR00906">
    <property type="entry name" value="SECA"/>
</dbReference>
<dbReference type="SMART" id="SM00957">
    <property type="entry name" value="SecA_DEAD"/>
    <property type="match status" value="1"/>
</dbReference>
<dbReference type="SMART" id="SM00958">
    <property type="entry name" value="SecA_PP_bind"/>
    <property type="match status" value="1"/>
</dbReference>
<dbReference type="SUPFAM" id="SSF81886">
    <property type="entry name" value="Helical scaffold and wing domains of SecA"/>
    <property type="match status" value="1"/>
</dbReference>
<dbReference type="SUPFAM" id="SSF52540">
    <property type="entry name" value="P-loop containing nucleoside triphosphate hydrolases"/>
    <property type="match status" value="2"/>
</dbReference>
<dbReference type="SUPFAM" id="SSF81767">
    <property type="entry name" value="Pre-protein crosslinking domain of SecA"/>
    <property type="match status" value="1"/>
</dbReference>
<dbReference type="PROSITE" id="PS01312">
    <property type="entry name" value="SECA"/>
    <property type="match status" value="1"/>
</dbReference>
<dbReference type="PROSITE" id="PS51196">
    <property type="entry name" value="SECA_MOTOR_DEAD"/>
    <property type="match status" value="1"/>
</dbReference>
<proteinExistence type="inferred from homology"/>
<gene>
    <name evidence="1" type="primary">secA</name>
    <name type="ordered locus">FTW_1470</name>
</gene>
<protein>
    <recommendedName>
        <fullName evidence="1">Protein translocase subunit SecA</fullName>
        <ecNumber evidence="1">7.4.2.8</ecNumber>
    </recommendedName>
</protein>
<accession>A4IZ46</accession>
<sequence>MLSLVQKIIGSRNERFIKKVSRIVQKINSLEPEFEKLSDEQLKAKTFEYRERLANGEILDNLLPEAFATVREAGKRTKNMRHYDVQLIGGIVLHQGKVAEMRTGEGKTLVATLPAYLNALTGDGVHVITVNDYLAKRDAELMSDIYEFLGMSVGVIVADLNPQQRKEAYACDITYGTNNEFGFDYLRDNMAYEKEQQVQRSRNYVIIDEVDSILIDEARTPLIISGASDDSSEMYNLFNRLVPYLEKQEKEEVENEQEQRDFYVDEKSKNAYLTEKGYAKIENMLKKEGILEEDDNLYSPHNITKMHYLNACLRAHSLYQLNIDYIVRDQEIVIIDESTGRAMPGRRWSDGLHQAIEAKEGVKVNAENQTMASITFQNFFKLYNKIAGMTGTADTEAFELHSIYGLEVIIIPTNKPMIRKDHHDEIYGSVSEKFDAIVEDIKERISKGQPVLVGTASIEASEVLSTLLKKKKIRHNVLNAKQHEKEASIIAMAGYPDNVTIATNMAGRGTDIILGGNLEVEIAQLEDPTPEDIAQIKAEWLKRNEAVKKAGGLCIIGSERHDSRRIDNQLRGRAARQGDPGESKFYLSMDDNLLRIFASQSMAERVKKGLKGGESLAFGFMSKVISKAQGKVESYHFDIRKNLLEYDNVVNTQRKVIYEQRQSFLEAEDVSDILADIRIDVAEQLFHDYVPAGSMHELWDLEGLEKALKSDFMIELDLQKLYEEDDSLGEEDLKRLVREAIEIEFVEKTKNLDSGAVRQFEKFSLLQSLDTHWREHLSSIDHLRNSINLRGYAQKDPKNEYKKEAFELFSTMLDNFKYEVISSLAKIRIATEEETQRAQQEWQESMSDIKAEHESVIDNNQRHDEDEQEEAPKVQQVRREGPKVKRNDPCPCGSGKKYKQCHSKVE</sequence>
<name>SECA_FRATW</name>
<feature type="chain" id="PRO_0000320819" description="Protein translocase subunit SecA">
    <location>
        <begin position="1"/>
        <end position="906"/>
    </location>
</feature>
<feature type="region of interest" description="Disordered" evidence="2">
    <location>
        <begin position="853"/>
        <end position="906"/>
    </location>
</feature>
<feature type="compositionally biased region" description="Basic and acidic residues" evidence="2">
    <location>
        <begin position="853"/>
        <end position="865"/>
    </location>
</feature>
<feature type="compositionally biased region" description="Basic and acidic residues" evidence="2">
    <location>
        <begin position="877"/>
        <end position="888"/>
    </location>
</feature>
<feature type="compositionally biased region" description="Basic residues" evidence="2">
    <location>
        <begin position="896"/>
        <end position="906"/>
    </location>
</feature>
<feature type="binding site" evidence="1">
    <location>
        <position position="86"/>
    </location>
    <ligand>
        <name>ATP</name>
        <dbReference type="ChEBI" id="CHEBI:30616"/>
    </ligand>
</feature>
<feature type="binding site" evidence="1">
    <location>
        <begin position="104"/>
        <end position="108"/>
    </location>
    <ligand>
        <name>ATP</name>
        <dbReference type="ChEBI" id="CHEBI:30616"/>
    </ligand>
</feature>
<feature type="binding site" evidence="1">
    <location>
        <position position="511"/>
    </location>
    <ligand>
        <name>ATP</name>
        <dbReference type="ChEBI" id="CHEBI:30616"/>
    </ligand>
</feature>
<feature type="binding site" evidence="1">
    <location>
        <position position="890"/>
    </location>
    <ligand>
        <name>Zn(2+)</name>
        <dbReference type="ChEBI" id="CHEBI:29105"/>
    </ligand>
</feature>
<feature type="binding site" evidence="1">
    <location>
        <position position="892"/>
    </location>
    <ligand>
        <name>Zn(2+)</name>
        <dbReference type="ChEBI" id="CHEBI:29105"/>
    </ligand>
</feature>
<feature type="binding site" evidence="1">
    <location>
        <position position="901"/>
    </location>
    <ligand>
        <name>Zn(2+)</name>
        <dbReference type="ChEBI" id="CHEBI:29105"/>
    </ligand>
</feature>
<feature type="binding site" evidence="1">
    <location>
        <position position="902"/>
    </location>
    <ligand>
        <name>Zn(2+)</name>
        <dbReference type="ChEBI" id="CHEBI:29105"/>
    </ligand>
</feature>
<reference key="1">
    <citation type="journal article" date="2007" name="PLoS ONE">
        <title>Complete genomic characterization of a pathogenic A.II strain of Francisella tularensis subspecies tularensis.</title>
        <authorList>
            <person name="Beckstrom-Sternberg S.M."/>
            <person name="Auerbach R.K."/>
            <person name="Godbole S."/>
            <person name="Pearson J.V."/>
            <person name="Beckstrom-Sternberg J.S."/>
            <person name="Deng Z."/>
            <person name="Munk C."/>
            <person name="Kubota K."/>
            <person name="Zhou Y."/>
            <person name="Bruce D."/>
            <person name="Noronha J."/>
            <person name="Scheuermann R.H."/>
            <person name="Wang A."/>
            <person name="Wei X."/>
            <person name="Wang J."/>
            <person name="Hao J."/>
            <person name="Wagner D.M."/>
            <person name="Brettin T.S."/>
            <person name="Brown N."/>
            <person name="Gilna P."/>
            <person name="Keim P.S."/>
        </authorList>
    </citation>
    <scope>NUCLEOTIDE SEQUENCE [LARGE SCALE GENOMIC DNA]</scope>
    <source>
        <strain>WY96-3418</strain>
    </source>
</reference>
<keyword id="KW-0067">ATP-binding</keyword>
<keyword id="KW-0997">Cell inner membrane</keyword>
<keyword id="KW-1003">Cell membrane</keyword>
<keyword id="KW-0963">Cytoplasm</keyword>
<keyword id="KW-0472">Membrane</keyword>
<keyword id="KW-0479">Metal-binding</keyword>
<keyword id="KW-0547">Nucleotide-binding</keyword>
<keyword id="KW-0653">Protein transport</keyword>
<keyword id="KW-1278">Translocase</keyword>
<keyword id="KW-0811">Translocation</keyword>
<keyword id="KW-0813">Transport</keyword>
<keyword id="KW-0862">Zinc</keyword>
<evidence type="ECO:0000255" key="1">
    <source>
        <dbReference type="HAMAP-Rule" id="MF_01382"/>
    </source>
</evidence>
<evidence type="ECO:0000256" key="2">
    <source>
        <dbReference type="SAM" id="MobiDB-lite"/>
    </source>
</evidence>